<proteinExistence type="inferred from homology"/>
<reference key="1">
    <citation type="journal article" date="2008" name="Infect. Immun.">
        <title>Genomic comparison of virulent Rickettsia rickettsii Sheila Smith and avirulent Rickettsia rickettsii Iowa.</title>
        <authorList>
            <person name="Ellison D.W."/>
            <person name="Clark T.R."/>
            <person name="Sturdevant D.E."/>
            <person name="Virtaneva K."/>
            <person name="Porcella S.F."/>
            <person name="Hackstadt T."/>
        </authorList>
    </citation>
    <scope>NUCLEOTIDE SEQUENCE [LARGE SCALE GENOMIC DNA]</scope>
    <source>
        <strain>Iowa</strain>
    </source>
</reference>
<comment type="function">
    <text evidence="1">Catalyzes the N-acylation of UDP-3-O-acylglucosamine using 3-hydroxyacyl-ACP as the acyl donor. Is involved in the biosynthesis of lipid A, a phosphorylated glycolipid that anchors the lipopolysaccharide to the outer membrane of the cell.</text>
</comment>
<comment type="catalytic activity">
    <reaction evidence="1">
        <text>a UDP-3-O-[(3R)-3-hydroxyacyl]-alpha-D-glucosamine + a (3R)-hydroxyacyl-[ACP] = a UDP-2-N,3-O-bis[(3R)-3-hydroxyacyl]-alpha-D-glucosamine + holo-[ACP] + H(+)</text>
        <dbReference type="Rhea" id="RHEA:53836"/>
        <dbReference type="Rhea" id="RHEA-COMP:9685"/>
        <dbReference type="Rhea" id="RHEA-COMP:9945"/>
        <dbReference type="ChEBI" id="CHEBI:15378"/>
        <dbReference type="ChEBI" id="CHEBI:64479"/>
        <dbReference type="ChEBI" id="CHEBI:78827"/>
        <dbReference type="ChEBI" id="CHEBI:137740"/>
        <dbReference type="ChEBI" id="CHEBI:137748"/>
        <dbReference type="EC" id="2.3.1.191"/>
    </reaction>
</comment>
<comment type="pathway">
    <text evidence="1">Bacterial outer membrane biogenesis; LPS lipid A biosynthesis.</text>
</comment>
<comment type="subunit">
    <text evidence="1">Homotrimer.</text>
</comment>
<comment type="similarity">
    <text evidence="1">Belongs to the transferase hexapeptide repeat family. LpxD subfamily.</text>
</comment>
<dbReference type="EC" id="2.3.1.191" evidence="1"/>
<dbReference type="EMBL" id="CP000766">
    <property type="protein sequence ID" value="ABY71941.1"/>
    <property type="molecule type" value="Genomic_DNA"/>
</dbReference>
<dbReference type="RefSeq" id="WP_012150232.1">
    <property type="nucleotide sequence ID" value="NC_010263.3"/>
</dbReference>
<dbReference type="SMR" id="B0BVR5"/>
<dbReference type="GeneID" id="79936822"/>
<dbReference type="KEGG" id="rrj:RrIowa_0009"/>
<dbReference type="eggNOG" id="COG1044">
    <property type="taxonomic scope" value="Bacteria"/>
</dbReference>
<dbReference type="HOGENOM" id="CLU_049865_0_0_5"/>
<dbReference type="UniPathway" id="UPA00973"/>
<dbReference type="Proteomes" id="UP000000796">
    <property type="component" value="Chromosome"/>
</dbReference>
<dbReference type="GO" id="GO:0016020">
    <property type="term" value="C:membrane"/>
    <property type="evidence" value="ECO:0007669"/>
    <property type="project" value="GOC"/>
</dbReference>
<dbReference type="GO" id="GO:0016410">
    <property type="term" value="F:N-acyltransferase activity"/>
    <property type="evidence" value="ECO:0007669"/>
    <property type="project" value="InterPro"/>
</dbReference>
<dbReference type="GO" id="GO:0009245">
    <property type="term" value="P:lipid A biosynthetic process"/>
    <property type="evidence" value="ECO:0007669"/>
    <property type="project" value="UniProtKB-UniRule"/>
</dbReference>
<dbReference type="CDD" id="cd03352">
    <property type="entry name" value="LbH_LpxD"/>
    <property type="match status" value="1"/>
</dbReference>
<dbReference type="Gene3D" id="2.160.10.10">
    <property type="entry name" value="Hexapeptide repeat proteins"/>
    <property type="match status" value="1"/>
</dbReference>
<dbReference type="Gene3D" id="3.40.1390.10">
    <property type="entry name" value="MurE/MurF, N-terminal domain"/>
    <property type="match status" value="1"/>
</dbReference>
<dbReference type="HAMAP" id="MF_00523">
    <property type="entry name" value="LpxD"/>
    <property type="match status" value="1"/>
</dbReference>
<dbReference type="InterPro" id="IPR001451">
    <property type="entry name" value="Hexapep"/>
</dbReference>
<dbReference type="InterPro" id="IPR018357">
    <property type="entry name" value="Hexapep_transf_CS"/>
</dbReference>
<dbReference type="InterPro" id="IPR007691">
    <property type="entry name" value="LpxD"/>
</dbReference>
<dbReference type="InterPro" id="IPR011004">
    <property type="entry name" value="Trimer_LpxA-like_sf"/>
</dbReference>
<dbReference type="InterPro" id="IPR020573">
    <property type="entry name" value="UDP_GlcNAc_AcTrfase_non-rep"/>
</dbReference>
<dbReference type="NCBIfam" id="TIGR01853">
    <property type="entry name" value="lipid_A_lpxD"/>
    <property type="match status" value="1"/>
</dbReference>
<dbReference type="NCBIfam" id="NF002060">
    <property type="entry name" value="PRK00892.1"/>
    <property type="match status" value="1"/>
</dbReference>
<dbReference type="PANTHER" id="PTHR43378">
    <property type="entry name" value="UDP-3-O-ACYLGLUCOSAMINE N-ACYLTRANSFERASE"/>
    <property type="match status" value="1"/>
</dbReference>
<dbReference type="PANTHER" id="PTHR43378:SF2">
    <property type="entry name" value="UDP-3-O-ACYLGLUCOSAMINE N-ACYLTRANSFERASE 1, MITOCHONDRIAL-RELATED"/>
    <property type="match status" value="1"/>
</dbReference>
<dbReference type="Pfam" id="PF00132">
    <property type="entry name" value="Hexapep"/>
    <property type="match status" value="1"/>
</dbReference>
<dbReference type="Pfam" id="PF04613">
    <property type="entry name" value="LpxD"/>
    <property type="match status" value="1"/>
</dbReference>
<dbReference type="SUPFAM" id="SSF51161">
    <property type="entry name" value="Trimeric LpxA-like enzymes"/>
    <property type="match status" value="1"/>
</dbReference>
<dbReference type="PROSITE" id="PS00101">
    <property type="entry name" value="HEXAPEP_TRANSFERASES"/>
    <property type="match status" value="2"/>
</dbReference>
<accession>B0BVR5</accession>
<name>LPXD_RICRO</name>
<keyword id="KW-0012">Acyltransferase</keyword>
<keyword id="KW-0441">Lipid A biosynthesis</keyword>
<keyword id="KW-0444">Lipid biosynthesis</keyword>
<keyword id="KW-0443">Lipid metabolism</keyword>
<keyword id="KW-0677">Repeat</keyword>
<keyword id="KW-0808">Transferase</keyword>
<organism>
    <name type="scientific">Rickettsia rickettsii (strain Iowa)</name>
    <dbReference type="NCBI Taxonomy" id="452659"/>
    <lineage>
        <taxon>Bacteria</taxon>
        <taxon>Pseudomonadati</taxon>
        <taxon>Pseudomonadota</taxon>
        <taxon>Alphaproteobacteria</taxon>
        <taxon>Rickettsiales</taxon>
        <taxon>Rickettsiaceae</taxon>
        <taxon>Rickettsieae</taxon>
        <taxon>Rickettsia</taxon>
        <taxon>spotted fever group</taxon>
    </lineage>
</organism>
<gene>
    <name evidence="1" type="primary">lpxD</name>
    <name type="ordered locus">RrIowa_0009</name>
</gene>
<evidence type="ECO:0000255" key="1">
    <source>
        <dbReference type="HAMAP-Rule" id="MF_00523"/>
    </source>
</evidence>
<protein>
    <recommendedName>
        <fullName evidence="1">UDP-3-O-acylglucosamine N-acyltransferase</fullName>
        <ecNumber evidence="1">2.3.1.191</ecNumber>
    </recommendedName>
</protein>
<feature type="chain" id="PRO_1000081692" description="UDP-3-O-acylglucosamine N-acyltransferase">
    <location>
        <begin position="1"/>
        <end position="345"/>
    </location>
</feature>
<feature type="active site" description="Proton acceptor" evidence="1">
    <location>
        <position position="252"/>
    </location>
</feature>
<sequence>MVSSNFYKNLGPRKLTAIIDFLHDIIAPPKIEDIAIHDIKILQEASPNDISFLSNPKYSEFLKTTKAAACIVPKNFTGEANPNTVLLHAQNSYFAYGKLIDFFYAPIKSYPTKIMKSAIVADSATIGKNCYIGHNVVIEDDVIIGDNSIIEAGSFIGRGVNIGRNARIEQHVSINYAIIGDDVVILAGAKIGQDGFGFSTEKGVHHKIFHIGIVKIGNNVEIGANTTIDRGSLQDTIIKDLCRIDNLVQIGHGVKIGKGSIIVAQTGIAGSSTIGKYCALGGQVGIAGHLNIGDGAQVAAQGGVAQNIEAGKIVGGSPAIPIMDWHRQSIIMKQLLKTSNSKLKK</sequence>